<keyword id="KW-0997">Cell inner membrane</keyword>
<keyword id="KW-1003">Cell membrane</keyword>
<keyword id="KW-0285">Flavoprotein</keyword>
<keyword id="KW-0288">FMN</keyword>
<keyword id="KW-0472">Membrane</keyword>
<keyword id="KW-0560">Oxidoreductase</keyword>
<evidence type="ECO:0000255" key="1">
    <source>
        <dbReference type="HAMAP-Rule" id="MF_01559"/>
    </source>
</evidence>
<organism>
    <name type="scientific">Serratia proteamaculans (strain 568)</name>
    <dbReference type="NCBI Taxonomy" id="399741"/>
    <lineage>
        <taxon>Bacteria</taxon>
        <taxon>Pseudomonadati</taxon>
        <taxon>Pseudomonadota</taxon>
        <taxon>Gammaproteobacteria</taxon>
        <taxon>Enterobacterales</taxon>
        <taxon>Yersiniaceae</taxon>
        <taxon>Serratia</taxon>
    </lineage>
</organism>
<gene>
    <name evidence="1" type="primary">lldD</name>
    <name type="ordered locus">Spro_3855</name>
</gene>
<accession>A8GIL1</accession>
<sequence>MIISASTDYRAAAQAKLPPFLFHYIDGGAYAEHTLRRNTEDLAGIALRQRILRNMSDLSLETSLFGEKLAMPVILGPVGLTGMYARRGEVQAAKAAAQKGIPFTLSTVSVCPIEEVAPAIDRPMWFQLYVLKDRGFMRNALERAKAAGVKTLVFTVDMPVPGARYRDAHSGMSGPNAAVRRMLQAVTHPQWAWDVGLCGKPHDLGNVSAYRGKPTSLEDYIGWLGTNFDPSISWKDLDWIREFWQGPMIIKGILDPEDAKDAVRFGADGIVVSNHGGRQLDGVLSTAHALPAIAEAVKGDITLLADSGIRSGLDVVRMIALGADGVLLGRAFAYALAAAGQAGVANLLELIDKEMRVAMTLIGAKTIADISADSLVQGLR</sequence>
<feature type="chain" id="PRO_1000068993" description="L-lactate dehydrogenase">
    <location>
        <begin position="1"/>
        <end position="380"/>
    </location>
</feature>
<feature type="domain" description="FMN hydroxy acid dehydrogenase" evidence="1">
    <location>
        <begin position="1"/>
        <end position="380"/>
    </location>
</feature>
<feature type="active site" description="Proton acceptor" evidence="1">
    <location>
        <position position="275"/>
    </location>
</feature>
<feature type="binding site" evidence="1">
    <location>
        <position position="24"/>
    </location>
    <ligand>
        <name>substrate</name>
    </ligand>
</feature>
<feature type="binding site" evidence="1">
    <location>
        <position position="106"/>
    </location>
    <ligand>
        <name>FMN</name>
        <dbReference type="ChEBI" id="CHEBI:58210"/>
    </ligand>
</feature>
<feature type="binding site" evidence="1">
    <location>
        <position position="127"/>
    </location>
    <ligand>
        <name>FMN</name>
        <dbReference type="ChEBI" id="CHEBI:58210"/>
    </ligand>
</feature>
<feature type="binding site" evidence="1">
    <location>
        <position position="129"/>
    </location>
    <ligand>
        <name>substrate</name>
    </ligand>
</feature>
<feature type="binding site" evidence="1">
    <location>
        <position position="155"/>
    </location>
    <ligand>
        <name>FMN</name>
        <dbReference type="ChEBI" id="CHEBI:58210"/>
    </ligand>
</feature>
<feature type="binding site" evidence="1">
    <location>
        <position position="164"/>
    </location>
    <ligand>
        <name>substrate</name>
    </ligand>
</feature>
<feature type="binding site" evidence="1">
    <location>
        <position position="251"/>
    </location>
    <ligand>
        <name>FMN</name>
        <dbReference type="ChEBI" id="CHEBI:58210"/>
    </ligand>
</feature>
<feature type="binding site" evidence="1">
    <location>
        <position position="278"/>
    </location>
    <ligand>
        <name>substrate</name>
    </ligand>
</feature>
<feature type="binding site" evidence="1">
    <location>
        <begin position="306"/>
        <end position="330"/>
    </location>
    <ligand>
        <name>FMN</name>
        <dbReference type="ChEBI" id="CHEBI:58210"/>
    </ligand>
</feature>
<dbReference type="EC" id="1.1.-.-" evidence="1"/>
<dbReference type="EMBL" id="CP000826">
    <property type="protein sequence ID" value="ABV42951.1"/>
    <property type="molecule type" value="Genomic_DNA"/>
</dbReference>
<dbReference type="SMR" id="A8GIL1"/>
<dbReference type="STRING" id="399741.Spro_3855"/>
<dbReference type="KEGG" id="spe:Spro_3855"/>
<dbReference type="eggNOG" id="COG1304">
    <property type="taxonomic scope" value="Bacteria"/>
</dbReference>
<dbReference type="HOGENOM" id="CLU_020639_0_0_6"/>
<dbReference type="OrthoDB" id="9770452at2"/>
<dbReference type="GO" id="GO:0005886">
    <property type="term" value="C:plasma membrane"/>
    <property type="evidence" value="ECO:0007669"/>
    <property type="project" value="UniProtKB-SubCell"/>
</dbReference>
<dbReference type="GO" id="GO:0010181">
    <property type="term" value="F:FMN binding"/>
    <property type="evidence" value="ECO:0007669"/>
    <property type="project" value="InterPro"/>
</dbReference>
<dbReference type="GO" id="GO:0004459">
    <property type="term" value="F:L-lactate dehydrogenase activity"/>
    <property type="evidence" value="ECO:0007669"/>
    <property type="project" value="UniProtKB-UniRule"/>
</dbReference>
<dbReference type="GO" id="GO:0009060">
    <property type="term" value="P:aerobic respiration"/>
    <property type="evidence" value="ECO:0007669"/>
    <property type="project" value="TreeGrafter"/>
</dbReference>
<dbReference type="GO" id="GO:0006089">
    <property type="term" value="P:lactate metabolic process"/>
    <property type="evidence" value="ECO:0007669"/>
    <property type="project" value="UniProtKB-UniRule"/>
</dbReference>
<dbReference type="CDD" id="cd02809">
    <property type="entry name" value="alpha_hydroxyacid_oxid_FMN"/>
    <property type="match status" value="1"/>
</dbReference>
<dbReference type="FunFam" id="3.20.20.70:FF:000029">
    <property type="entry name" value="L-lactate dehydrogenase"/>
    <property type="match status" value="1"/>
</dbReference>
<dbReference type="Gene3D" id="3.20.20.70">
    <property type="entry name" value="Aldolase class I"/>
    <property type="match status" value="1"/>
</dbReference>
<dbReference type="HAMAP" id="MF_01559">
    <property type="entry name" value="L_lact_dehydr"/>
    <property type="match status" value="1"/>
</dbReference>
<dbReference type="InterPro" id="IPR013785">
    <property type="entry name" value="Aldolase_TIM"/>
</dbReference>
<dbReference type="InterPro" id="IPR012133">
    <property type="entry name" value="Alpha-hydoxy_acid_DH_FMN"/>
</dbReference>
<dbReference type="InterPro" id="IPR000262">
    <property type="entry name" value="FMN-dep_DH"/>
</dbReference>
<dbReference type="InterPro" id="IPR037396">
    <property type="entry name" value="FMN_HAD"/>
</dbReference>
<dbReference type="InterPro" id="IPR008259">
    <property type="entry name" value="FMN_hydac_DH_AS"/>
</dbReference>
<dbReference type="InterPro" id="IPR020920">
    <property type="entry name" value="LldD"/>
</dbReference>
<dbReference type="NCBIfam" id="NF033901">
    <property type="entry name" value="L_lactate_LldD"/>
    <property type="match status" value="1"/>
</dbReference>
<dbReference type="NCBIfam" id="NF008398">
    <property type="entry name" value="PRK11197.1"/>
    <property type="match status" value="1"/>
</dbReference>
<dbReference type="PANTHER" id="PTHR10578:SF85">
    <property type="entry name" value="L-LACTATE DEHYDROGENASE"/>
    <property type="match status" value="1"/>
</dbReference>
<dbReference type="PANTHER" id="PTHR10578">
    <property type="entry name" value="S -2-HYDROXY-ACID OXIDASE-RELATED"/>
    <property type="match status" value="1"/>
</dbReference>
<dbReference type="Pfam" id="PF01070">
    <property type="entry name" value="FMN_dh"/>
    <property type="match status" value="1"/>
</dbReference>
<dbReference type="PIRSF" id="PIRSF000138">
    <property type="entry name" value="Al-hdrx_acd_dh"/>
    <property type="match status" value="1"/>
</dbReference>
<dbReference type="SUPFAM" id="SSF51395">
    <property type="entry name" value="FMN-linked oxidoreductases"/>
    <property type="match status" value="1"/>
</dbReference>
<dbReference type="PROSITE" id="PS00557">
    <property type="entry name" value="FMN_HYDROXY_ACID_DH_1"/>
    <property type="match status" value="1"/>
</dbReference>
<dbReference type="PROSITE" id="PS51349">
    <property type="entry name" value="FMN_HYDROXY_ACID_DH_2"/>
    <property type="match status" value="1"/>
</dbReference>
<proteinExistence type="inferred from homology"/>
<reference key="1">
    <citation type="submission" date="2007-09" db="EMBL/GenBank/DDBJ databases">
        <title>Complete sequence of chromosome of Serratia proteamaculans 568.</title>
        <authorList>
            <consortium name="US DOE Joint Genome Institute"/>
            <person name="Copeland A."/>
            <person name="Lucas S."/>
            <person name="Lapidus A."/>
            <person name="Barry K."/>
            <person name="Glavina del Rio T."/>
            <person name="Dalin E."/>
            <person name="Tice H."/>
            <person name="Pitluck S."/>
            <person name="Chain P."/>
            <person name="Malfatti S."/>
            <person name="Shin M."/>
            <person name="Vergez L."/>
            <person name="Schmutz J."/>
            <person name="Larimer F."/>
            <person name="Land M."/>
            <person name="Hauser L."/>
            <person name="Kyrpides N."/>
            <person name="Kim E."/>
            <person name="Taghavi S."/>
            <person name="Newman L."/>
            <person name="Vangronsveld J."/>
            <person name="van der Lelie D."/>
            <person name="Richardson P."/>
        </authorList>
    </citation>
    <scope>NUCLEOTIDE SEQUENCE [LARGE SCALE GENOMIC DNA]</scope>
    <source>
        <strain>568</strain>
    </source>
</reference>
<name>LLDD_SERP5</name>
<protein>
    <recommendedName>
        <fullName evidence="1">L-lactate dehydrogenase</fullName>
        <ecNumber evidence="1">1.1.-.-</ecNumber>
    </recommendedName>
</protein>
<comment type="function">
    <text evidence="1">Catalyzes the conversion of L-lactate to pyruvate. Is coupled to the respiratory chain.</text>
</comment>
<comment type="catalytic activity">
    <reaction evidence="1">
        <text>(S)-lactate + A = pyruvate + AH2</text>
        <dbReference type="Rhea" id="RHEA:45816"/>
        <dbReference type="ChEBI" id="CHEBI:13193"/>
        <dbReference type="ChEBI" id="CHEBI:15361"/>
        <dbReference type="ChEBI" id="CHEBI:16651"/>
        <dbReference type="ChEBI" id="CHEBI:17499"/>
    </reaction>
</comment>
<comment type="cofactor">
    <cofactor evidence="1">
        <name>FMN</name>
        <dbReference type="ChEBI" id="CHEBI:58210"/>
    </cofactor>
</comment>
<comment type="subcellular location">
    <subcellularLocation>
        <location evidence="1">Cell inner membrane</location>
        <topology evidence="1">Peripheral membrane protein</topology>
    </subcellularLocation>
</comment>
<comment type="similarity">
    <text evidence="1">Belongs to the FMN-dependent alpha-hydroxy acid dehydrogenase family.</text>
</comment>